<organism>
    <name type="scientific">Streptococcus agalactiae serotype Ia (strain ATCC 27591 / A909 / CDC SS700)</name>
    <dbReference type="NCBI Taxonomy" id="205921"/>
    <lineage>
        <taxon>Bacteria</taxon>
        <taxon>Bacillati</taxon>
        <taxon>Bacillota</taxon>
        <taxon>Bacilli</taxon>
        <taxon>Lactobacillales</taxon>
        <taxon>Streptococcaceae</taxon>
        <taxon>Streptococcus</taxon>
    </lineage>
</organism>
<reference key="1">
    <citation type="journal article" date="2005" name="Proc. Natl. Acad. Sci. U.S.A.">
        <title>Genome analysis of multiple pathogenic isolates of Streptococcus agalactiae: implications for the microbial 'pan-genome'.</title>
        <authorList>
            <person name="Tettelin H."/>
            <person name="Masignani V."/>
            <person name="Cieslewicz M.J."/>
            <person name="Donati C."/>
            <person name="Medini D."/>
            <person name="Ward N.L."/>
            <person name="Angiuoli S.V."/>
            <person name="Crabtree J."/>
            <person name="Jones A.L."/>
            <person name="Durkin A.S."/>
            <person name="DeBoy R.T."/>
            <person name="Davidsen T.M."/>
            <person name="Mora M."/>
            <person name="Scarselli M."/>
            <person name="Margarit y Ros I."/>
            <person name="Peterson J.D."/>
            <person name="Hauser C.R."/>
            <person name="Sundaram J.P."/>
            <person name="Nelson W.C."/>
            <person name="Madupu R."/>
            <person name="Brinkac L.M."/>
            <person name="Dodson R.J."/>
            <person name="Rosovitz M.J."/>
            <person name="Sullivan S.A."/>
            <person name="Daugherty S.C."/>
            <person name="Haft D.H."/>
            <person name="Selengut J."/>
            <person name="Gwinn M.L."/>
            <person name="Zhou L."/>
            <person name="Zafar N."/>
            <person name="Khouri H."/>
            <person name="Radune D."/>
            <person name="Dimitrov G."/>
            <person name="Watkins K."/>
            <person name="O'Connor K.J."/>
            <person name="Smith S."/>
            <person name="Utterback T.R."/>
            <person name="White O."/>
            <person name="Rubens C.E."/>
            <person name="Grandi G."/>
            <person name="Madoff L.C."/>
            <person name="Kasper D.L."/>
            <person name="Telford J.L."/>
            <person name="Wessels M.R."/>
            <person name="Rappuoli R."/>
            <person name="Fraser C.M."/>
        </authorList>
    </citation>
    <scope>NUCLEOTIDE SEQUENCE [LARGE SCALE GENOMIC DNA]</scope>
    <source>
        <strain>ATCC 27591 / A909 / CDC SS700</strain>
    </source>
</reference>
<comment type="function">
    <text evidence="1">Allows the formation of correctly charged Asn-tRNA(Asn) or Gln-tRNA(Gln) through the transamidation of misacylated Asp-tRNA(Asn) or Glu-tRNA(Gln) in organisms which lack either or both of asparaginyl-tRNA or glutaminyl-tRNA synthetases. The reaction takes place in the presence of glutamine and ATP through an activated phospho-Asp-tRNA(Asn) or phospho-Glu-tRNA(Gln).</text>
</comment>
<comment type="catalytic activity">
    <reaction evidence="1">
        <text>L-glutamyl-tRNA(Gln) + L-glutamine + ATP + H2O = L-glutaminyl-tRNA(Gln) + L-glutamate + ADP + phosphate + H(+)</text>
        <dbReference type="Rhea" id="RHEA:17521"/>
        <dbReference type="Rhea" id="RHEA-COMP:9681"/>
        <dbReference type="Rhea" id="RHEA-COMP:9684"/>
        <dbReference type="ChEBI" id="CHEBI:15377"/>
        <dbReference type="ChEBI" id="CHEBI:15378"/>
        <dbReference type="ChEBI" id="CHEBI:29985"/>
        <dbReference type="ChEBI" id="CHEBI:30616"/>
        <dbReference type="ChEBI" id="CHEBI:43474"/>
        <dbReference type="ChEBI" id="CHEBI:58359"/>
        <dbReference type="ChEBI" id="CHEBI:78520"/>
        <dbReference type="ChEBI" id="CHEBI:78521"/>
        <dbReference type="ChEBI" id="CHEBI:456216"/>
    </reaction>
</comment>
<comment type="catalytic activity">
    <reaction evidence="1">
        <text>L-aspartyl-tRNA(Asn) + L-glutamine + ATP + H2O = L-asparaginyl-tRNA(Asn) + L-glutamate + ADP + phosphate + 2 H(+)</text>
        <dbReference type="Rhea" id="RHEA:14513"/>
        <dbReference type="Rhea" id="RHEA-COMP:9674"/>
        <dbReference type="Rhea" id="RHEA-COMP:9677"/>
        <dbReference type="ChEBI" id="CHEBI:15377"/>
        <dbReference type="ChEBI" id="CHEBI:15378"/>
        <dbReference type="ChEBI" id="CHEBI:29985"/>
        <dbReference type="ChEBI" id="CHEBI:30616"/>
        <dbReference type="ChEBI" id="CHEBI:43474"/>
        <dbReference type="ChEBI" id="CHEBI:58359"/>
        <dbReference type="ChEBI" id="CHEBI:78515"/>
        <dbReference type="ChEBI" id="CHEBI:78516"/>
        <dbReference type="ChEBI" id="CHEBI:456216"/>
    </reaction>
</comment>
<comment type="subunit">
    <text evidence="1">Heterotrimer of A, B and C subunits.</text>
</comment>
<comment type="similarity">
    <text evidence="1">Belongs to the GatC family.</text>
</comment>
<protein>
    <recommendedName>
        <fullName evidence="1">Aspartyl/glutamyl-tRNA(Asn/Gln) amidotransferase subunit C</fullName>
        <shortName evidence="1">Asp/Glu-ADT subunit C</shortName>
        <ecNumber evidence="1">6.3.5.-</ecNumber>
    </recommendedName>
</protein>
<evidence type="ECO:0000255" key="1">
    <source>
        <dbReference type="HAMAP-Rule" id="MF_00122"/>
    </source>
</evidence>
<name>GATC_STRA1</name>
<accession>Q3JZM0</accession>
<dbReference type="EC" id="6.3.5.-" evidence="1"/>
<dbReference type="EMBL" id="CP000114">
    <property type="protein sequence ID" value="ABA45169.1"/>
    <property type="molecule type" value="Genomic_DNA"/>
</dbReference>
<dbReference type="RefSeq" id="WP_000703032.1">
    <property type="nucleotide sequence ID" value="NC_007432.1"/>
</dbReference>
<dbReference type="SMR" id="Q3JZM0"/>
<dbReference type="KEGG" id="sak:SAK_1681"/>
<dbReference type="HOGENOM" id="CLU_105899_1_2_9"/>
<dbReference type="GO" id="GO:0050566">
    <property type="term" value="F:asparaginyl-tRNA synthase (glutamine-hydrolyzing) activity"/>
    <property type="evidence" value="ECO:0007669"/>
    <property type="project" value="RHEA"/>
</dbReference>
<dbReference type="GO" id="GO:0005524">
    <property type="term" value="F:ATP binding"/>
    <property type="evidence" value="ECO:0007669"/>
    <property type="project" value="UniProtKB-KW"/>
</dbReference>
<dbReference type="GO" id="GO:0050567">
    <property type="term" value="F:glutaminyl-tRNA synthase (glutamine-hydrolyzing) activity"/>
    <property type="evidence" value="ECO:0007669"/>
    <property type="project" value="UniProtKB-UniRule"/>
</dbReference>
<dbReference type="GO" id="GO:0070681">
    <property type="term" value="P:glutaminyl-tRNAGln biosynthesis via transamidation"/>
    <property type="evidence" value="ECO:0007669"/>
    <property type="project" value="TreeGrafter"/>
</dbReference>
<dbReference type="GO" id="GO:0006450">
    <property type="term" value="P:regulation of translational fidelity"/>
    <property type="evidence" value="ECO:0007669"/>
    <property type="project" value="InterPro"/>
</dbReference>
<dbReference type="GO" id="GO:0006412">
    <property type="term" value="P:translation"/>
    <property type="evidence" value="ECO:0007669"/>
    <property type="project" value="UniProtKB-UniRule"/>
</dbReference>
<dbReference type="Gene3D" id="1.10.20.60">
    <property type="entry name" value="Glu-tRNAGln amidotransferase C subunit, N-terminal domain"/>
    <property type="match status" value="1"/>
</dbReference>
<dbReference type="HAMAP" id="MF_00122">
    <property type="entry name" value="GatC"/>
    <property type="match status" value="1"/>
</dbReference>
<dbReference type="InterPro" id="IPR036113">
    <property type="entry name" value="Asp/Glu-ADT_sf_sub_c"/>
</dbReference>
<dbReference type="InterPro" id="IPR003837">
    <property type="entry name" value="GatC"/>
</dbReference>
<dbReference type="NCBIfam" id="TIGR00135">
    <property type="entry name" value="gatC"/>
    <property type="match status" value="1"/>
</dbReference>
<dbReference type="PANTHER" id="PTHR15004">
    <property type="entry name" value="GLUTAMYL-TRNA(GLN) AMIDOTRANSFERASE SUBUNIT C, MITOCHONDRIAL"/>
    <property type="match status" value="1"/>
</dbReference>
<dbReference type="PANTHER" id="PTHR15004:SF0">
    <property type="entry name" value="GLUTAMYL-TRNA(GLN) AMIDOTRANSFERASE SUBUNIT C, MITOCHONDRIAL"/>
    <property type="match status" value="1"/>
</dbReference>
<dbReference type="Pfam" id="PF02686">
    <property type="entry name" value="GatC"/>
    <property type="match status" value="1"/>
</dbReference>
<dbReference type="SUPFAM" id="SSF141000">
    <property type="entry name" value="Glu-tRNAGln amidotransferase C subunit"/>
    <property type="match status" value="1"/>
</dbReference>
<gene>
    <name evidence="1" type="primary">gatC</name>
    <name type="ordered locus">SAK_1681</name>
</gene>
<feature type="chain" id="PRO_1000016220" description="Aspartyl/glutamyl-tRNA(Asn/Gln) amidotransferase subunit C">
    <location>
        <begin position="1"/>
        <end position="100"/>
    </location>
</feature>
<proteinExistence type="inferred from homology"/>
<sequence>MKISEEEVRHVANLSKLRFSDQETKEFASSLSKIVDMIELLNEVDTEGVPVTTTMADRKTVMREDIAQPGHNRDDLFKNVPQHQDYYIKVPAILEDGGDA</sequence>
<keyword id="KW-0067">ATP-binding</keyword>
<keyword id="KW-0436">Ligase</keyword>
<keyword id="KW-0547">Nucleotide-binding</keyword>
<keyword id="KW-0648">Protein biosynthesis</keyword>